<comment type="function">
    <text evidence="1">Component of the PAN1 actin cytoskeleton-regulatory complex required for the internalization of endosomes during actin-coupled endocytosis. The complex links the site of endocytosis to the cell membrane-associated actin cytoskeleton. Mediates uptake of external molecules and vacuolar degradation of plasma membrane proteins. Plays a role in the proper organization of the cell membrane-associated actin cytoskeleton and promotes its destabilization (By similarity).</text>
</comment>
<comment type="subunit">
    <text evidence="1">Component of the PAN1 actin cytoskeleton-regulatory complex.</text>
</comment>
<comment type="subcellular location">
    <subcellularLocation>
        <location evidence="1">Cell membrane</location>
        <topology evidence="1">Peripheral membrane protein</topology>
        <orientation evidence="1">Cytoplasmic side</orientation>
    </subcellularLocation>
    <subcellularLocation>
        <location evidence="1">Endosome membrane</location>
        <topology evidence="1">Peripheral membrane protein</topology>
        <orientation evidence="1">Cytoplasmic side</orientation>
    </subcellularLocation>
    <subcellularLocation>
        <location evidence="1">Cytoplasm</location>
        <location evidence="1">Cytoskeleton</location>
        <location evidence="1">Actin patch</location>
    </subcellularLocation>
    <text evidence="1">Cytoplasmic and cortical actin patches.</text>
</comment>
<comment type="similarity">
    <text evidence="7">Belongs to the PAN1 family.</text>
</comment>
<dbReference type="EMBL" id="AM270295">
    <property type="protein sequence ID" value="CAK46430.1"/>
    <property type="molecule type" value="Genomic_DNA"/>
</dbReference>
<dbReference type="SMR" id="A2R180"/>
<dbReference type="EnsemblFungi" id="CAK46430">
    <property type="protein sequence ID" value="CAK46430"/>
    <property type="gene ID" value="An13g00290"/>
</dbReference>
<dbReference type="VEuPathDB" id="FungiDB:An13g00290"/>
<dbReference type="HOGENOM" id="CLU_001963_1_0_1"/>
<dbReference type="Proteomes" id="UP000006706">
    <property type="component" value="Chromosome 2L"/>
</dbReference>
<dbReference type="GO" id="GO:0030479">
    <property type="term" value="C:actin cortical patch"/>
    <property type="evidence" value="ECO:0007669"/>
    <property type="project" value="UniProtKB-SubCell"/>
</dbReference>
<dbReference type="GO" id="GO:0010008">
    <property type="term" value="C:endosome membrane"/>
    <property type="evidence" value="ECO:0007669"/>
    <property type="project" value="UniProtKB-SubCell"/>
</dbReference>
<dbReference type="GO" id="GO:0005886">
    <property type="term" value="C:plasma membrane"/>
    <property type="evidence" value="ECO:0007669"/>
    <property type="project" value="UniProtKB-SubCell"/>
</dbReference>
<dbReference type="GO" id="GO:0003779">
    <property type="term" value="F:actin binding"/>
    <property type="evidence" value="ECO:0007669"/>
    <property type="project" value="UniProtKB-KW"/>
</dbReference>
<dbReference type="GO" id="GO:0005509">
    <property type="term" value="F:calcium ion binding"/>
    <property type="evidence" value="ECO:0007669"/>
    <property type="project" value="InterPro"/>
</dbReference>
<dbReference type="GO" id="GO:0006897">
    <property type="term" value="P:endocytosis"/>
    <property type="evidence" value="ECO:0007669"/>
    <property type="project" value="UniProtKB-KW"/>
</dbReference>
<dbReference type="GO" id="GO:0016197">
    <property type="term" value="P:endosomal transport"/>
    <property type="evidence" value="ECO:0007669"/>
    <property type="project" value="TreeGrafter"/>
</dbReference>
<dbReference type="CDD" id="cd00052">
    <property type="entry name" value="EH"/>
    <property type="match status" value="2"/>
</dbReference>
<dbReference type="FunFam" id="1.10.238.10:FF:000349">
    <property type="entry name" value="Actin cytoskeleton-regulatory complex protein PAN1"/>
    <property type="match status" value="1"/>
</dbReference>
<dbReference type="Gene3D" id="1.10.238.10">
    <property type="entry name" value="EF-hand"/>
    <property type="match status" value="2"/>
</dbReference>
<dbReference type="InterPro" id="IPR013182">
    <property type="entry name" value="DUF1720"/>
</dbReference>
<dbReference type="InterPro" id="IPR011992">
    <property type="entry name" value="EF-hand-dom_pair"/>
</dbReference>
<dbReference type="InterPro" id="IPR002048">
    <property type="entry name" value="EF_hand_dom"/>
</dbReference>
<dbReference type="InterPro" id="IPR000261">
    <property type="entry name" value="EH_dom"/>
</dbReference>
<dbReference type="InterPro" id="IPR003124">
    <property type="entry name" value="WH2_dom"/>
</dbReference>
<dbReference type="PANTHER" id="PTHR11216:SF170">
    <property type="entry name" value="DYNAMIN ASSOCIATED PROTEIN 160, ISOFORM D"/>
    <property type="match status" value="1"/>
</dbReference>
<dbReference type="PANTHER" id="PTHR11216">
    <property type="entry name" value="EH DOMAIN"/>
    <property type="match status" value="1"/>
</dbReference>
<dbReference type="Pfam" id="PF08226">
    <property type="entry name" value="DUF1720"/>
    <property type="match status" value="2"/>
</dbReference>
<dbReference type="Pfam" id="PF12763">
    <property type="entry name" value="EH"/>
    <property type="match status" value="2"/>
</dbReference>
<dbReference type="Pfam" id="PF02205">
    <property type="entry name" value="WH2"/>
    <property type="match status" value="1"/>
</dbReference>
<dbReference type="SMART" id="SM00054">
    <property type="entry name" value="EFh"/>
    <property type="match status" value="2"/>
</dbReference>
<dbReference type="SMART" id="SM00027">
    <property type="entry name" value="EH"/>
    <property type="match status" value="2"/>
</dbReference>
<dbReference type="SUPFAM" id="SSF47473">
    <property type="entry name" value="EF-hand"/>
    <property type="match status" value="2"/>
</dbReference>
<dbReference type="PROSITE" id="PS50222">
    <property type="entry name" value="EF_HAND_2"/>
    <property type="match status" value="2"/>
</dbReference>
<dbReference type="PROSITE" id="PS50031">
    <property type="entry name" value="EH"/>
    <property type="match status" value="2"/>
</dbReference>
<dbReference type="PROSITE" id="PS51082">
    <property type="entry name" value="WH2"/>
    <property type="match status" value="1"/>
</dbReference>
<gene>
    <name type="primary">pan1</name>
    <name type="ORF">An13g00290</name>
</gene>
<evidence type="ECO:0000250" key="1"/>
<evidence type="ECO:0000255" key="2"/>
<evidence type="ECO:0000255" key="3">
    <source>
        <dbReference type="PROSITE-ProRule" id="PRU00077"/>
    </source>
</evidence>
<evidence type="ECO:0000255" key="4">
    <source>
        <dbReference type="PROSITE-ProRule" id="PRU00406"/>
    </source>
</evidence>
<evidence type="ECO:0000255" key="5">
    <source>
        <dbReference type="PROSITE-ProRule" id="PRU00448"/>
    </source>
</evidence>
<evidence type="ECO:0000256" key="6">
    <source>
        <dbReference type="SAM" id="MobiDB-lite"/>
    </source>
</evidence>
<evidence type="ECO:0000305" key="7"/>
<sequence>MYSSSNTFLGGANSARPGQPLMQQSPYSQQFASGQQQQPPQQGGFAPQPTGYGPQMSSFGASQLQPQATGFPAGQLQPQFTGFPGAVPQSQQTGFQPPVQQAQITGYPAQSQPPQFQVPASTGLPVRQAPRTSSEIADSFQDVAGMAPPPPPKASASKIPNIRLSFITAQDQAKFEQLFKSAVGDNQTMSGDKAKELLLRSKLPGNDLSKIWVLSDSTKSGQLFFPEFALAMYLCNLRITGRELPSALPEKIRNEVSSMVDIISFQVPDTQPEPAVRTNVPNFDAPLLENKSAPPAPQQPQPQQPSNAQLLTQLTAQPTGFPQPTGFQQSQSPFPGQNSALAPQATGFPGQPQQLQPQPTGFMTNPQPTGYNGPRPPMPPMPTGFGSNLSPAQTGGVSALAAQPTGIPGQWGFVNAPATGLPNIEALKQQLMPQPGREGGFSAVGLSGNAHIPWAITKEEKKIYDDLFRAWDGFRKGFIGGDTAIEIMGQSGLDRSDLERIWTLADPNNRGRLNMDEFAVAMHLIYRKLNGYPVPNRLPPELVPPSTRNLNDSIGTIKSMLSQDAEMSPGGGRKDATLFKNNDEAAAGYRSSARRRVGNNGRTPSPAASQASEEELSVDQLKKKIREAQIMLDAVDFQDENQAEEDDALDRRDRREAESLMDRIRRVQDDIDTHPDASFRNLDTGAERRSLRRQLQAYEDQVPQVASEVRRVEREIAEVRLELFRLKDAKEHPNSASSIVGTGPGGTVTEADRIKARARARMQARAAELAGRPVPASQDDDGAATRRLEAENATVKAERERNETMTRDVEESVREFARSLEDSLKDGGESSTREHERRRWEDALGVEDVVRDFIYDLKRSSRTAHVRKEEQQRAADTQSQRSRYNESPLGGAAGSQHSPTPTGSVVSAGSTHEDRVAAARERAQKRIAERMAAAGLKPHSDAGETLLQRQEREKKEREERLRRAEEEDAKREQERQRRLAEEQGGPTAQSAKPASKKPPPAPPSRKGRTDSAGQAEAKKAREEAAKVEQSTREQAIREEQQAQEEETARLEAAAREREAEFLKEKEAQEARLAALQEQVRQGKIKKQEEKRRKEEAARAAKEQEARLATQRAELEMAKERERQLQLELEGLDESSSDEEGPINITPQDSTPTQSQVLPAVDTAVPPPAPAPAPELDVVTSPAESASSHAAPTSISPEAESKNPYFKRISQSDSQVPPPPPAPQPAAPKAESQSTNPFHRLAQQQESSKPAFTAPGPLERKSRVRPEVDDDWSAAGSDFDDSSDDDDERPGGGSAKQLASILFGTMAPPRPLSAMDDKTPSKSSTPVQDSPATPTPPTEAAESPAAVPPPPPPPPAPAPAVPSPSAAAPPPPPPAPSMAPPVPPPGVPPPPAPPAAPTGGAGRGALLASIQAGTGLRKVQTNDRSTSSSAGRVLD</sequence>
<protein>
    <recommendedName>
        <fullName>Actin cytoskeleton-regulatory complex protein pan1</fullName>
    </recommendedName>
</protein>
<keyword id="KW-0009">Actin-binding</keyword>
<keyword id="KW-1003">Cell membrane</keyword>
<keyword id="KW-0175">Coiled coil</keyword>
<keyword id="KW-0963">Cytoplasm</keyword>
<keyword id="KW-0206">Cytoskeleton</keyword>
<keyword id="KW-0254">Endocytosis</keyword>
<keyword id="KW-0967">Endosome</keyword>
<keyword id="KW-0472">Membrane</keyword>
<keyword id="KW-1185">Reference proteome</keyword>
<keyword id="KW-0677">Repeat</keyword>
<organism>
    <name type="scientific">Aspergillus niger (strain ATCC MYA-4892 / CBS 513.88 / FGSC A1513)</name>
    <dbReference type="NCBI Taxonomy" id="425011"/>
    <lineage>
        <taxon>Eukaryota</taxon>
        <taxon>Fungi</taxon>
        <taxon>Dikarya</taxon>
        <taxon>Ascomycota</taxon>
        <taxon>Pezizomycotina</taxon>
        <taxon>Eurotiomycetes</taxon>
        <taxon>Eurotiomycetidae</taxon>
        <taxon>Eurotiales</taxon>
        <taxon>Aspergillaceae</taxon>
        <taxon>Aspergillus</taxon>
        <taxon>Aspergillus subgen. Circumdati</taxon>
    </lineage>
</organism>
<feature type="chain" id="PRO_0000349467" description="Actin cytoskeleton-regulatory complex protein pan1">
    <location>
        <begin position="1"/>
        <end position="1434"/>
    </location>
</feature>
<feature type="domain" description="EH 1" evidence="3">
    <location>
        <begin position="171"/>
        <end position="259"/>
    </location>
</feature>
<feature type="domain" description="EF-hand 1" evidence="5">
    <location>
        <begin position="203"/>
        <end position="238"/>
    </location>
</feature>
<feature type="domain" description="EH 2" evidence="3">
    <location>
        <begin position="460"/>
        <end position="549"/>
    </location>
</feature>
<feature type="domain" description="EF-hand 2" evidence="5">
    <location>
        <begin position="493"/>
        <end position="528"/>
    </location>
</feature>
<feature type="domain" description="WH2" evidence="4">
    <location>
        <begin position="1401"/>
        <end position="1418"/>
    </location>
</feature>
<feature type="region of interest" description="Disordered" evidence="6">
    <location>
        <begin position="1"/>
        <end position="133"/>
    </location>
</feature>
<feature type="region of interest" description="Disordered" evidence="6">
    <location>
        <begin position="271"/>
        <end position="380"/>
    </location>
</feature>
<feature type="region of interest" description="Disordered" evidence="6">
    <location>
        <begin position="587"/>
        <end position="615"/>
    </location>
</feature>
<feature type="region of interest" description="Disordered" evidence="6">
    <location>
        <begin position="768"/>
        <end position="814"/>
    </location>
</feature>
<feature type="region of interest" description="Disordered" evidence="6">
    <location>
        <begin position="862"/>
        <end position="1063"/>
    </location>
</feature>
<feature type="region of interest" description="Disordered" evidence="6">
    <location>
        <begin position="1078"/>
        <end position="1434"/>
    </location>
</feature>
<feature type="coiled-coil region" evidence="2">
    <location>
        <begin position="607"/>
        <end position="815"/>
    </location>
</feature>
<feature type="coiled-coil region" evidence="2">
    <location>
        <begin position="941"/>
        <end position="1137"/>
    </location>
</feature>
<feature type="compositionally biased region" description="Low complexity" evidence="6">
    <location>
        <begin position="28"/>
        <end position="49"/>
    </location>
</feature>
<feature type="compositionally biased region" description="Polar residues" evidence="6">
    <location>
        <begin position="55"/>
        <end position="68"/>
    </location>
</feature>
<feature type="compositionally biased region" description="Polar residues" evidence="6">
    <location>
        <begin position="88"/>
        <end position="120"/>
    </location>
</feature>
<feature type="compositionally biased region" description="Pro residues" evidence="6">
    <location>
        <begin position="294"/>
        <end position="303"/>
    </location>
</feature>
<feature type="compositionally biased region" description="Polar residues" evidence="6">
    <location>
        <begin position="306"/>
        <end position="341"/>
    </location>
</feature>
<feature type="compositionally biased region" description="Low complexity" evidence="6">
    <location>
        <begin position="349"/>
        <end position="359"/>
    </location>
</feature>
<feature type="compositionally biased region" description="Polar residues" evidence="6">
    <location>
        <begin position="361"/>
        <end position="370"/>
    </location>
</feature>
<feature type="compositionally biased region" description="Polar residues" evidence="6">
    <location>
        <begin position="600"/>
        <end position="611"/>
    </location>
</feature>
<feature type="compositionally biased region" description="Basic and acidic residues" evidence="6">
    <location>
        <begin position="783"/>
        <end position="814"/>
    </location>
</feature>
<feature type="compositionally biased region" description="Polar residues" evidence="6">
    <location>
        <begin position="895"/>
        <end position="910"/>
    </location>
</feature>
<feature type="compositionally biased region" description="Basic and acidic residues" evidence="6">
    <location>
        <begin position="911"/>
        <end position="929"/>
    </location>
</feature>
<feature type="compositionally biased region" description="Basic and acidic residues" evidence="6">
    <location>
        <begin position="949"/>
        <end position="981"/>
    </location>
</feature>
<feature type="compositionally biased region" description="Basic and acidic residues" evidence="6">
    <location>
        <begin position="1016"/>
        <end position="1063"/>
    </location>
</feature>
<feature type="compositionally biased region" description="Basic and acidic residues" evidence="6">
    <location>
        <begin position="1085"/>
        <end position="1105"/>
    </location>
</feature>
<feature type="compositionally biased region" description="Basic and acidic residues" evidence="6">
    <location>
        <begin position="1112"/>
        <end position="1124"/>
    </location>
</feature>
<feature type="compositionally biased region" description="Acidic residues" evidence="6">
    <location>
        <begin position="1129"/>
        <end position="1140"/>
    </location>
</feature>
<feature type="compositionally biased region" description="Polar residues" evidence="6">
    <location>
        <begin position="1144"/>
        <end position="1155"/>
    </location>
</feature>
<feature type="compositionally biased region" description="Low complexity" evidence="6">
    <location>
        <begin position="1173"/>
        <end position="1193"/>
    </location>
</feature>
<feature type="compositionally biased region" description="Pro residues" evidence="6">
    <location>
        <begin position="1215"/>
        <end position="1225"/>
    </location>
</feature>
<feature type="compositionally biased region" description="Basic and acidic residues" evidence="6">
    <location>
        <begin position="1257"/>
        <end position="1266"/>
    </location>
</feature>
<feature type="compositionally biased region" description="Acidic residues" evidence="6">
    <location>
        <begin position="1267"/>
        <end position="1287"/>
    </location>
</feature>
<feature type="compositionally biased region" description="Polar residues" evidence="6">
    <location>
        <begin position="1320"/>
        <end position="1329"/>
    </location>
</feature>
<feature type="compositionally biased region" description="Pro residues" evidence="6">
    <location>
        <begin position="1345"/>
        <end position="1395"/>
    </location>
</feature>
<feature type="compositionally biased region" description="Polar residues" evidence="6">
    <location>
        <begin position="1421"/>
        <end position="1434"/>
    </location>
</feature>
<proteinExistence type="inferred from homology"/>
<accession>A2R180</accession>
<name>PAN1_ASPNC</name>
<reference key="1">
    <citation type="journal article" date="2007" name="Nat. Biotechnol.">
        <title>Genome sequencing and analysis of the versatile cell factory Aspergillus niger CBS 513.88.</title>
        <authorList>
            <person name="Pel H.J."/>
            <person name="de Winde J.H."/>
            <person name="Archer D.B."/>
            <person name="Dyer P.S."/>
            <person name="Hofmann G."/>
            <person name="Schaap P.J."/>
            <person name="Turner G."/>
            <person name="de Vries R.P."/>
            <person name="Albang R."/>
            <person name="Albermann K."/>
            <person name="Andersen M.R."/>
            <person name="Bendtsen J.D."/>
            <person name="Benen J.A.E."/>
            <person name="van den Berg M."/>
            <person name="Breestraat S."/>
            <person name="Caddick M.X."/>
            <person name="Contreras R."/>
            <person name="Cornell M."/>
            <person name="Coutinho P.M."/>
            <person name="Danchin E.G.J."/>
            <person name="Debets A.J.M."/>
            <person name="Dekker P."/>
            <person name="van Dijck P.W.M."/>
            <person name="van Dijk A."/>
            <person name="Dijkhuizen L."/>
            <person name="Driessen A.J.M."/>
            <person name="d'Enfert C."/>
            <person name="Geysens S."/>
            <person name="Goosen C."/>
            <person name="Groot G.S.P."/>
            <person name="de Groot P.W.J."/>
            <person name="Guillemette T."/>
            <person name="Henrissat B."/>
            <person name="Herweijer M."/>
            <person name="van den Hombergh J.P.T.W."/>
            <person name="van den Hondel C.A.M.J.J."/>
            <person name="van der Heijden R.T.J.M."/>
            <person name="van der Kaaij R.M."/>
            <person name="Klis F.M."/>
            <person name="Kools H.J."/>
            <person name="Kubicek C.P."/>
            <person name="van Kuyk P.A."/>
            <person name="Lauber J."/>
            <person name="Lu X."/>
            <person name="van der Maarel M.J.E.C."/>
            <person name="Meulenberg R."/>
            <person name="Menke H."/>
            <person name="Mortimer M.A."/>
            <person name="Nielsen J."/>
            <person name="Oliver S.G."/>
            <person name="Olsthoorn M."/>
            <person name="Pal K."/>
            <person name="van Peij N.N.M.E."/>
            <person name="Ram A.F.J."/>
            <person name="Rinas U."/>
            <person name="Roubos J.A."/>
            <person name="Sagt C.M.J."/>
            <person name="Schmoll M."/>
            <person name="Sun J."/>
            <person name="Ussery D."/>
            <person name="Varga J."/>
            <person name="Vervecken W."/>
            <person name="van de Vondervoort P.J.J."/>
            <person name="Wedler H."/>
            <person name="Woesten H.A.B."/>
            <person name="Zeng A.-P."/>
            <person name="van Ooyen A.J.J."/>
            <person name="Visser J."/>
            <person name="Stam H."/>
        </authorList>
    </citation>
    <scope>NUCLEOTIDE SEQUENCE [LARGE SCALE GENOMIC DNA]</scope>
    <source>
        <strain>ATCC MYA-4892 / CBS 513.88 / FGSC A1513</strain>
    </source>
</reference>